<proteinExistence type="inferred from homology"/>
<reference key="1">
    <citation type="journal article" date="2011" name="Stand. Genomic Sci.">
        <title>Complete genome sequence of the halophilic and highly halotolerant Chromohalobacter salexigens type strain (1H11(T)).</title>
        <authorList>
            <person name="Copeland A."/>
            <person name="O'Connor K."/>
            <person name="Lucas S."/>
            <person name="Lapidus A."/>
            <person name="Berry K.W."/>
            <person name="Detter J.C."/>
            <person name="Del Rio T.G."/>
            <person name="Hammon N."/>
            <person name="Dalin E."/>
            <person name="Tice H."/>
            <person name="Pitluck S."/>
            <person name="Bruce D."/>
            <person name="Goodwin L."/>
            <person name="Han C."/>
            <person name="Tapia R."/>
            <person name="Saunders E."/>
            <person name="Schmutz J."/>
            <person name="Brettin T."/>
            <person name="Larimer F."/>
            <person name="Land M."/>
            <person name="Hauser L."/>
            <person name="Vargas C."/>
            <person name="Nieto J.J."/>
            <person name="Kyrpides N.C."/>
            <person name="Ivanova N."/>
            <person name="Goker M."/>
            <person name="Klenk H.P."/>
            <person name="Csonka L.N."/>
            <person name="Woyke T."/>
        </authorList>
    </citation>
    <scope>NUCLEOTIDE SEQUENCE [LARGE SCALE GENOMIC DNA]</scope>
    <source>
        <strain>ATCC BAA-138 / DSM 3043 / CIP 106854 / NCIMB 13768 / 1H11</strain>
    </source>
</reference>
<keyword id="KW-0143">Chaperone</keyword>
<keyword id="KW-0963">Cytoplasm</keyword>
<keyword id="KW-1185">Reference proteome</keyword>
<keyword id="KW-0346">Stress response</keyword>
<name>GRPE_CHRSD</name>
<sequence>MAKDPQTPTDEELARAERDAEPQPGDATDDEVELEGVVEDVEASEADAEALENPEADALAARVEELEQALADAKDQTARAAAEAQNVRRRAEQDVEKARKFALEKFVKELLPVVDSLEKALESMQEGASEVHREGVSMTLKLQLDVLAKFGVEAVDPQGEPFDPQVHEAMTMVPNPEVEPNTVIEVMQKGYLLNGRLVRPAMVVVSQAAN</sequence>
<protein>
    <recommendedName>
        <fullName evidence="1">Protein GrpE</fullName>
    </recommendedName>
    <alternativeName>
        <fullName evidence="1">HSP-70 cofactor</fullName>
    </alternativeName>
</protein>
<gene>
    <name evidence="1" type="primary">grpE</name>
    <name type="ordered locus">Csal_3095</name>
</gene>
<organism>
    <name type="scientific">Chromohalobacter salexigens (strain ATCC BAA-138 / DSM 3043 / CIP 106854 / NCIMB 13768 / 1H11)</name>
    <dbReference type="NCBI Taxonomy" id="290398"/>
    <lineage>
        <taxon>Bacteria</taxon>
        <taxon>Pseudomonadati</taxon>
        <taxon>Pseudomonadota</taxon>
        <taxon>Gammaproteobacteria</taxon>
        <taxon>Oceanospirillales</taxon>
        <taxon>Halomonadaceae</taxon>
        <taxon>Chromohalobacter</taxon>
    </lineage>
</organism>
<comment type="function">
    <text evidence="1">Participates actively in the response to hyperosmotic and heat shock by preventing the aggregation of stress-denatured proteins, in association with DnaK and GrpE. It is the nucleotide exchange factor for DnaK and may function as a thermosensor. Unfolded proteins bind initially to DnaJ; upon interaction with the DnaJ-bound protein, DnaK hydrolyzes its bound ATP, resulting in the formation of a stable complex. GrpE releases ADP from DnaK; ATP binding to DnaK triggers the release of the substrate protein, thus completing the reaction cycle. Several rounds of ATP-dependent interactions between DnaJ, DnaK and GrpE are required for fully efficient folding.</text>
</comment>
<comment type="subunit">
    <text evidence="1">Homodimer.</text>
</comment>
<comment type="subcellular location">
    <subcellularLocation>
        <location evidence="1">Cytoplasm</location>
    </subcellularLocation>
</comment>
<comment type="similarity">
    <text evidence="1">Belongs to the GrpE family.</text>
</comment>
<feature type="chain" id="PRO_1000065515" description="Protein GrpE">
    <location>
        <begin position="1"/>
        <end position="210"/>
    </location>
</feature>
<feature type="region of interest" description="Disordered" evidence="2">
    <location>
        <begin position="1"/>
        <end position="31"/>
    </location>
</feature>
<feature type="compositionally biased region" description="Basic and acidic residues" evidence="2">
    <location>
        <begin position="12"/>
        <end position="21"/>
    </location>
</feature>
<dbReference type="EMBL" id="CP000285">
    <property type="protein sequence ID" value="ABE60439.1"/>
    <property type="molecule type" value="Genomic_DNA"/>
</dbReference>
<dbReference type="RefSeq" id="WP_011508385.1">
    <property type="nucleotide sequence ID" value="NC_007963.1"/>
</dbReference>
<dbReference type="SMR" id="Q1QSW9"/>
<dbReference type="STRING" id="290398.Csal_3095"/>
<dbReference type="GeneID" id="95335791"/>
<dbReference type="KEGG" id="csa:Csal_3095"/>
<dbReference type="eggNOG" id="COG0576">
    <property type="taxonomic scope" value="Bacteria"/>
</dbReference>
<dbReference type="HOGENOM" id="CLU_057217_6_0_6"/>
<dbReference type="OrthoDB" id="9789811at2"/>
<dbReference type="Proteomes" id="UP000000239">
    <property type="component" value="Chromosome"/>
</dbReference>
<dbReference type="GO" id="GO:0005829">
    <property type="term" value="C:cytosol"/>
    <property type="evidence" value="ECO:0007669"/>
    <property type="project" value="TreeGrafter"/>
</dbReference>
<dbReference type="GO" id="GO:0000774">
    <property type="term" value="F:adenyl-nucleotide exchange factor activity"/>
    <property type="evidence" value="ECO:0007669"/>
    <property type="project" value="InterPro"/>
</dbReference>
<dbReference type="GO" id="GO:0042803">
    <property type="term" value="F:protein homodimerization activity"/>
    <property type="evidence" value="ECO:0007669"/>
    <property type="project" value="InterPro"/>
</dbReference>
<dbReference type="GO" id="GO:0051087">
    <property type="term" value="F:protein-folding chaperone binding"/>
    <property type="evidence" value="ECO:0007669"/>
    <property type="project" value="InterPro"/>
</dbReference>
<dbReference type="GO" id="GO:0051082">
    <property type="term" value="F:unfolded protein binding"/>
    <property type="evidence" value="ECO:0007669"/>
    <property type="project" value="TreeGrafter"/>
</dbReference>
<dbReference type="GO" id="GO:0006457">
    <property type="term" value="P:protein folding"/>
    <property type="evidence" value="ECO:0007669"/>
    <property type="project" value="InterPro"/>
</dbReference>
<dbReference type="CDD" id="cd00446">
    <property type="entry name" value="GrpE"/>
    <property type="match status" value="1"/>
</dbReference>
<dbReference type="FunFam" id="2.30.22.10:FF:000001">
    <property type="entry name" value="Protein GrpE"/>
    <property type="match status" value="1"/>
</dbReference>
<dbReference type="Gene3D" id="3.90.20.20">
    <property type="match status" value="1"/>
</dbReference>
<dbReference type="Gene3D" id="2.30.22.10">
    <property type="entry name" value="Head domain of nucleotide exchange factor GrpE"/>
    <property type="match status" value="1"/>
</dbReference>
<dbReference type="HAMAP" id="MF_01151">
    <property type="entry name" value="GrpE"/>
    <property type="match status" value="1"/>
</dbReference>
<dbReference type="InterPro" id="IPR000740">
    <property type="entry name" value="GrpE"/>
</dbReference>
<dbReference type="InterPro" id="IPR013805">
    <property type="entry name" value="GrpE_coiled_coil"/>
</dbReference>
<dbReference type="InterPro" id="IPR009012">
    <property type="entry name" value="GrpE_head"/>
</dbReference>
<dbReference type="NCBIfam" id="NF010737">
    <property type="entry name" value="PRK14139.1"/>
    <property type="match status" value="1"/>
</dbReference>
<dbReference type="NCBIfam" id="NF010738">
    <property type="entry name" value="PRK14140.1"/>
    <property type="match status" value="1"/>
</dbReference>
<dbReference type="NCBIfam" id="NF010748">
    <property type="entry name" value="PRK14150.1"/>
    <property type="match status" value="1"/>
</dbReference>
<dbReference type="PANTHER" id="PTHR21237">
    <property type="entry name" value="GRPE PROTEIN"/>
    <property type="match status" value="1"/>
</dbReference>
<dbReference type="PANTHER" id="PTHR21237:SF23">
    <property type="entry name" value="GRPE PROTEIN HOMOLOG, MITOCHONDRIAL"/>
    <property type="match status" value="1"/>
</dbReference>
<dbReference type="Pfam" id="PF01025">
    <property type="entry name" value="GrpE"/>
    <property type="match status" value="1"/>
</dbReference>
<dbReference type="PRINTS" id="PR00773">
    <property type="entry name" value="GRPEPROTEIN"/>
</dbReference>
<dbReference type="SUPFAM" id="SSF58014">
    <property type="entry name" value="Coiled-coil domain of nucleotide exchange factor GrpE"/>
    <property type="match status" value="1"/>
</dbReference>
<dbReference type="SUPFAM" id="SSF51064">
    <property type="entry name" value="Head domain of nucleotide exchange factor GrpE"/>
    <property type="match status" value="1"/>
</dbReference>
<dbReference type="PROSITE" id="PS01071">
    <property type="entry name" value="GRPE"/>
    <property type="match status" value="1"/>
</dbReference>
<evidence type="ECO:0000255" key="1">
    <source>
        <dbReference type="HAMAP-Rule" id="MF_01151"/>
    </source>
</evidence>
<evidence type="ECO:0000256" key="2">
    <source>
        <dbReference type="SAM" id="MobiDB-lite"/>
    </source>
</evidence>
<accession>Q1QSW9</accession>